<sequence>MTLDVDAQKKDEKLLLSTIQQEYKILAEYKMIESEKVSGIYVIPSYANSLQWFGVFFGRQGFYENSVFRFSILLPDGFPDDKAVPAIIFQHNVVHPLVCPYTNSLDISHAFPEWRCGEDHLWQVLKYIQAIFADPLDSIRSVANIQELSNPEASKLLNTNRDAYAALVQESIVESKSRVYDTPPTEDPHYIVFEKFQANVHGPVLDQIRKSRNTIVPAESGVGGAATGLSWVKVKEGDFKPLSIE</sequence>
<keyword id="KW-1185">Reference proteome</keyword>
<evidence type="ECO:0000255" key="1">
    <source>
        <dbReference type="PROSITE-ProRule" id="PRU00388"/>
    </source>
</evidence>
<evidence type="ECO:0000305" key="2"/>
<organism>
    <name type="scientific">Drosophila virilis</name>
    <name type="common">Fruit fly</name>
    <dbReference type="NCBI Taxonomy" id="7244"/>
    <lineage>
        <taxon>Eukaryota</taxon>
        <taxon>Metazoa</taxon>
        <taxon>Ecdysozoa</taxon>
        <taxon>Arthropoda</taxon>
        <taxon>Hexapoda</taxon>
        <taxon>Insecta</taxon>
        <taxon>Pterygota</taxon>
        <taxon>Neoptera</taxon>
        <taxon>Endopterygota</taxon>
        <taxon>Diptera</taxon>
        <taxon>Brachycera</taxon>
        <taxon>Muscomorpha</taxon>
        <taxon>Ephydroidea</taxon>
        <taxon>Drosophilidae</taxon>
        <taxon>Drosophila</taxon>
    </lineage>
</organism>
<comment type="similarity">
    <text evidence="1">Belongs to the ubiquitin-conjugating enzyme family. FTS subfamily.</text>
</comment>
<comment type="caution">
    <text evidence="2">Lacks the conserved Cys residue necessary for ubiquitin-conjugating enzyme E2 activity.</text>
</comment>
<protein>
    <recommendedName>
        <fullName>Protein crossbronx</fullName>
    </recommendedName>
</protein>
<name>AKTP1_DROVI</name>
<dbReference type="EMBL" id="CH940648">
    <property type="protein sequence ID" value="EDW61124.1"/>
    <property type="molecule type" value="Genomic_DNA"/>
</dbReference>
<dbReference type="SMR" id="B4LNV5"/>
<dbReference type="FunCoup" id="B4LNV5">
    <property type="interactions" value="1015"/>
</dbReference>
<dbReference type="STRING" id="7244.B4LNV5"/>
<dbReference type="EnsemblMetazoa" id="FBtr0236401">
    <property type="protein sequence ID" value="FBpp0234893"/>
    <property type="gene ID" value="FBgn0207616"/>
</dbReference>
<dbReference type="EnsemblMetazoa" id="XM_002049895.3">
    <property type="protein sequence ID" value="XP_002049931.1"/>
    <property type="gene ID" value="LOC6627189"/>
</dbReference>
<dbReference type="GeneID" id="6627189"/>
<dbReference type="KEGG" id="dvi:6627189"/>
<dbReference type="CTD" id="47272"/>
<dbReference type="eggNOG" id="KOG0429">
    <property type="taxonomic scope" value="Eukaryota"/>
</dbReference>
<dbReference type="HOGENOM" id="CLU_083049_1_0_1"/>
<dbReference type="InParanoid" id="B4LNV5"/>
<dbReference type="OMA" id="LEXSLLA"/>
<dbReference type="OrthoDB" id="5596422at2759"/>
<dbReference type="PhylomeDB" id="B4LNV5"/>
<dbReference type="ChiTaRS" id="Ubx">
    <property type="organism name" value="fly"/>
</dbReference>
<dbReference type="Proteomes" id="UP000008792">
    <property type="component" value="Unassembled WGS sequence"/>
</dbReference>
<dbReference type="CDD" id="cd23814">
    <property type="entry name" value="UEV_AKTIP"/>
    <property type="match status" value="1"/>
</dbReference>
<dbReference type="FunFam" id="3.10.110.10:FF:000121">
    <property type="entry name" value="Protein crossbronx"/>
    <property type="match status" value="1"/>
</dbReference>
<dbReference type="Gene3D" id="3.10.110.10">
    <property type="entry name" value="Ubiquitin Conjugating Enzyme"/>
    <property type="match status" value="1"/>
</dbReference>
<dbReference type="InterPro" id="IPR000608">
    <property type="entry name" value="UBQ-conjugat_E2_core"/>
</dbReference>
<dbReference type="InterPro" id="IPR016135">
    <property type="entry name" value="UBQ-conjugating_enzyme/RWD"/>
</dbReference>
<dbReference type="Pfam" id="PF00179">
    <property type="entry name" value="UQ_con"/>
    <property type="match status" value="1"/>
</dbReference>
<dbReference type="SMART" id="SM00212">
    <property type="entry name" value="UBCc"/>
    <property type="match status" value="1"/>
</dbReference>
<dbReference type="SUPFAM" id="SSF54495">
    <property type="entry name" value="UBC-like"/>
    <property type="match status" value="1"/>
</dbReference>
<dbReference type="PROSITE" id="PS50127">
    <property type="entry name" value="UBC_2"/>
    <property type="match status" value="1"/>
</dbReference>
<feature type="chain" id="PRO_0000379038" description="Protein crossbronx">
    <location>
        <begin position="1"/>
        <end position="245"/>
    </location>
</feature>
<feature type="domain" description="UBC core" evidence="1">
    <location>
        <begin position="20"/>
        <end position="177"/>
    </location>
</feature>
<reference key="1">
    <citation type="journal article" date="2007" name="Nature">
        <title>Evolution of genes and genomes on the Drosophila phylogeny.</title>
        <authorList>
            <consortium name="Drosophila 12 genomes consortium"/>
        </authorList>
    </citation>
    <scope>NUCLEOTIDE SEQUENCE [LARGE SCALE GENOMIC DNA]</scope>
    <source>
        <strain>Tucson 15010-1051.87</strain>
    </source>
</reference>
<gene>
    <name type="primary">cbx</name>
    <name type="ORF">GJ20476</name>
</gene>
<accession>B4LNV5</accession>
<proteinExistence type="inferred from homology"/>